<comment type="function">
    <text evidence="1">This protein binds to 23S rRNA in the presence of protein L20.</text>
</comment>
<comment type="subunit">
    <text evidence="1">Part of the 50S ribosomal subunit. Contacts protein L20.</text>
</comment>
<comment type="similarity">
    <text evidence="1">Belongs to the bacterial ribosomal protein bL21 family.</text>
</comment>
<proteinExistence type="inferred from homology"/>
<dbReference type="EMBL" id="AE014613">
    <property type="protein sequence ID" value="AAO70757.1"/>
    <property type="molecule type" value="Genomic_DNA"/>
</dbReference>
<dbReference type="EMBL" id="AL513382">
    <property type="protein sequence ID" value="CAD07821.1"/>
    <property type="molecule type" value="Genomic_DNA"/>
</dbReference>
<dbReference type="RefSeq" id="NP_457683.1">
    <property type="nucleotide sequence ID" value="NC_003198.1"/>
</dbReference>
<dbReference type="RefSeq" id="WP_000271396.1">
    <property type="nucleotide sequence ID" value="NZ_WSUR01000003.1"/>
</dbReference>
<dbReference type="SMR" id="Q8XGA0"/>
<dbReference type="STRING" id="220341.gene:17587334"/>
<dbReference type="GeneID" id="66757643"/>
<dbReference type="KEGG" id="stt:t3221"/>
<dbReference type="KEGG" id="sty:STY3483"/>
<dbReference type="PATRIC" id="fig|220341.7.peg.3547"/>
<dbReference type="eggNOG" id="COG0261">
    <property type="taxonomic scope" value="Bacteria"/>
</dbReference>
<dbReference type="HOGENOM" id="CLU_061463_3_3_6"/>
<dbReference type="OMA" id="HRQPFTK"/>
<dbReference type="OrthoDB" id="9813334at2"/>
<dbReference type="Proteomes" id="UP000000541">
    <property type="component" value="Chromosome"/>
</dbReference>
<dbReference type="Proteomes" id="UP000002670">
    <property type="component" value="Chromosome"/>
</dbReference>
<dbReference type="GO" id="GO:0005737">
    <property type="term" value="C:cytoplasm"/>
    <property type="evidence" value="ECO:0007669"/>
    <property type="project" value="UniProtKB-ARBA"/>
</dbReference>
<dbReference type="GO" id="GO:1990904">
    <property type="term" value="C:ribonucleoprotein complex"/>
    <property type="evidence" value="ECO:0007669"/>
    <property type="project" value="UniProtKB-KW"/>
</dbReference>
<dbReference type="GO" id="GO:0005840">
    <property type="term" value="C:ribosome"/>
    <property type="evidence" value="ECO:0007669"/>
    <property type="project" value="UniProtKB-KW"/>
</dbReference>
<dbReference type="GO" id="GO:0019843">
    <property type="term" value="F:rRNA binding"/>
    <property type="evidence" value="ECO:0007669"/>
    <property type="project" value="UniProtKB-UniRule"/>
</dbReference>
<dbReference type="GO" id="GO:0003735">
    <property type="term" value="F:structural constituent of ribosome"/>
    <property type="evidence" value="ECO:0007669"/>
    <property type="project" value="InterPro"/>
</dbReference>
<dbReference type="GO" id="GO:0006412">
    <property type="term" value="P:translation"/>
    <property type="evidence" value="ECO:0007669"/>
    <property type="project" value="UniProtKB-UniRule"/>
</dbReference>
<dbReference type="HAMAP" id="MF_01363">
    <property type="entry name" value="Ribosomal_bL21"/>
    <property type="match status" value="1"/>
</dbReference>
<dbReference type="InterPro" id="IPR028909">
    <property type="entry name" value="bL21-like"/>
</dbReference>
<dbReference type="InterPro" id="IPR036164">
    <property type="entry name" value="bL21-like_sf"/>
</dbReference>
<dbReference type="InterPro" id="IPR001787">
    <property type="entry name" value="Ribosomal_bL21"/>
</dbReference>
<dbReference type="InterPro" id="IPR018258">
    <property type="entry name" value="Ribosomal_bL21_CS"/>
</dbReference>
<dbReference type="NCBIfam" id="TIGR00061">
    <property type="entry name" value="L21"/>
    <property type="match status" value="1"/>
</dbReference>
<dbReference type="PANTHER" id="PTHR21349">
    <property type="entry name" value="50S RIBOSOMAL PROTEIN L21"/>
    <property type="match status" value="1"/>
</dbReference>
<dbReference type="PANTHER" id="PTHR21349:SF0">
    <property type="entry name" value="LARGE RIBOSOMAL SUBUNIT PROTEIN BL21M"/>
    <property type="match status" value="1"/>
</dbReference>
<dbReference type="Pfam" id="PF00829">
    <property type="entry name" value="Ribosomal_L21p"/>
    <property type="match status" value="1"/>
</dbReference>
<dbReference type="SUPFAM" id="SSF141091">
    <property type="entry name" value="L21p-like"/>
    <property type="match status" value="1"/>
</dbReference>
<dbReference type="PROSITE" id="PS01169">
    <property type="entry name" value="RIBOSOMAL_L21"/>
    <property type="match status" value="1"/>
</dbReference>
<evidence type="ECO:0000255" key="1">
    <source>
        <dbReference type="HAMAP-Rule" id="MF_01363"/>
    </source>
</evidence>
<evidence type="ECO:0000305" key="2"/>
<gene>
    <name evidence="1" type="primary">rplU</name>
    <name type="ordered locus">STY3483</name>
    <name type="ordered locus">t3221</name>
</gene>
<organism>
    <name type="scientific">Salmonella typhi</name>
    <dbReference type="NCBI Taxonomy" id="90370"/>
    <lineage>
        <taxon>Bacteria</taxon>
        <taxon>Pseudomonadati</taxon>
        <taxon>Pseudomonadota</taxon>
        <taxon>Gammaproteobacteria</taxon>
        <taxon>Enterobacterales</taxon>
        <taxon>Enterobacteriaceae</taxon>
        <taxon>Salmonella</taxon>
    </lineage>
</organism>
<accession>Q8XGA0</accession>
<accession>Q7AM69</accession>
<sequence length="103" mass="11578">MYAVFQSGGKQHRVSEGQTVRLEKLDIATGETIEFAEVLMIANGEEVKIGVPFVDGGVIKAEVVAHGRGEKVKIVKFRRRKHYRKQQGHRQWFTDVKITGISA</sequence>
<keyword id="KW-0687">Ribonucleoprotein</keyword>
<keyword id="KW-0689">Ribosomal protein</keyword>
<keyword id="KW-0694">RNA-binding</keyword>
<keyword id="KW-0699">rRNA-binding</keyword>
<feature type="chain" id="PRO_0000269372" description="Large ribosomal subunit protein bL21">
    <location>
        <begin position="1"/>
        <end position="103"/>
    </location>
</feature>
<name>RL21_SALTI</name>
<protein>
    <recommendedName>
        <fullName evidence="1">Large ribosomal subunit protein bL21</fullName>
    </recommendedName>
    <alternativeName>
        <fullName evidence="2">50S ribosomal protein L21</fullName>
    </alternativeName>
</protein>
<reference key="1">
    <citation type="journal article" date="2003" name="J. Bacteriol.">
        <title>Comparative genomics of Salmonella enterica serovar Typhi strains Ty2 and CT18.</title>
        <authorList>
            <person name="Deng W."/>
            <person name="Liou S.-R."/>
            <person name="Plunkett G. III"/>
            <person name="Mayhew G.F."/>
            <person name="Rose D.J."/>
            <person name="Burland V."/>
            <person name="Kodoyianni V."/>
            <person name="Schwartz D.C."/>
            <person name="Blattner F.R."/>
        </authorList>
    </citation>
    <scope>NUCLEOTIDE SEQUENCE [LARGE SCALE GENOMIC DNA]</scope>
    <source>
        <strain>ATCC 700931 / Ty2</strain>
    </source>
</reference>
<reference key="2">
    <citation type="journal article" date="2001" name="Nature">
        <title>Complete genome sequence of a multiple drug resistant Salmonella enterica serovar Typhi CT18.</title>
        <authorList>
            <person name="Parkhill J."/>
            <person name="Dougan G."/>
            <person name="James K.D."/>
            <person name="Thomson N.R."/>
            <person name="Pickard D."/>
            <person name="Wain J."/>
            <person name="Churcher C.M."/>
            <person name="Mungall K.L."/>
            <person name="Bentley S.D."/>
            <person name="Holden M.T.G."/>
            <person name="Sebaihia M."/>
            <person name="Baker S."/>
            <person name="Basham D."/>
            <person name="Brooks K."/>
            <person name="Chillingworth T."/>
            <person name="Connerton P."/>
            <person name="Cronin A."/>
            <person name="Davis P."/>
            <person name="Davies R.M."/>
            <person name="Dowd L."/>
            <person name="White N."/>
            <person name="Farrar J."/>
            <person name="Feltwell T."/>
            <person name="Hamlin N."/>
            <person name="Haque A."/>
            <person name="Hien T.T."/>
            <person name="Holroyd S."/>
            <person name="Jagels K."/>
            <person name="Krogh A."/>
            <person name="Larsen T.S."/>
            <person name="Leather S."/>
            <person name="Moule S."/>
            <person name="O'Gaora P."/>
            <person name="Parry C."/>
            <person name="Quail M.A."/>
            <person name="Rutherford K.M."/>
            <person name="Simmonds M."/>
            <person name="Skelton J."/>
            <person name="Stevens K."/>
            <person name="Whitehead S."/>
            <person name="Barrell B.G."/>
        </authorList>
    </citation>
    <scope>NUCLEOTIDE SEQUENCE [LARGE SCALE GENOMIC DNA]</scope>
    <source>
        <strain>CT18</strain>
    </source>
</reference>